<dbReference type="EC" id="1.1.1.49" evidence="1"/>
<dbReference type="EMBL" id="CP000480">
    <property type="protein sequence ID" value="ABK72464.1"/>
    <property type="molecule type" value="Genomic_DNA"/>
</dbReference>
<dbReference type="EMBL" id="CP001663">
    <property type="protein sequence ID" value="AFP36788.1"/>
    <property type="molecule type" value="Genomic_DNA"/>
</dbReference>
<dbReference type="RefSeq" id="WP_011726838.1">
    <property type="nucleotide sequence ID" value="NZ_SIJM01000018.1"/>
</dbReference>
<dbReference type="RefSeq" id="YP_884728.1">
    <property type="nucleotide sequence ID" value="NC_008596.1"/>
</dbReference>
<dbReference type="SMR" id="A0QP90"/>
<dbReference type="STRING" id="246196.MSMEG_0314"/>
<dbReference type="PaxDb" id="246196-MSMEI_0307"/>
<dbReference type="GeneID" id="93455237"/>
<dbReference type="KEGG" id="msb:LJ00_01575"/>
<dbReference type="KEGG" id="msg:MSMEI_0307"/>
<dbReference type="KEGG" id="msm:MSMEG_0314"/>
<dbReference type="PATRIC" id="fig|246196.19.peg.311"/>
<dbReference type="eggNOG" id="COG0364">
    <property type="taxonomic scope" value="Bacteria"/>
</dbReference>
<dbReference type="OrthoDB" id="9802739at2"/>
<dbReference type="UniPathway" id="UPA00115">
    <property type="reaction ID" value="UER00408"/>
</dbReference>
<dbReference type="Proteomes" id="UP000000757">
    <property type="component" value="Chromosome"/>
</dbReference>
<dbReference type="Proteomes" id="UP000006158">
    <property type="component" value="Chromosome"/>
</dbReference>
<dbReference type="GO" id="GO:0005829">
    <property type="term" value="C:cytosol"/>
    <property type="evidence" value="ECO:0007669"/>
    <property type="project" value="TreeGrafter"/>
</dbReference>
<dbReference type="GO" id="GO:0004345">
    <property type="term" value="F:glucose-6-phosphate dehydrogenase activity"/>
    <property type="evidence" value="ECO:0007669"/>
    <property type="project" value="UniProtKB-UniRule"/>
</dbReference>
<dbReference type="GO" id="GO:0050661">
    <property type="term" value="F:NADP binding"/>
    <property type="evidence" value="ECO:0007669"/>
    <property type="project" value="UniProtKB-UniRule"/>
</dbReference>
<dbReference type="GO" id="GO:0006006">
    <property type="term" value="P:glucose metabolic process"/>
    <property type="evidence" value="ECO:0007669"/>
    <property type="project" value="UniProtKB-KW"/>
</dbReference>
<dbReference type="GO" id="GO:0009051">
    <property type="term" value="P:pentose-phosphate shunt, oxidative branch"/>
    <property type="evidence" value="ECO:0007669"/>
    <property type="project" value="TreeGrafter"/>
</dbReference>
<dbReference type="Gene3D" id="3.30.360.10">
    <property type="entry name" value="Dihydrodipicolinate Reductase, domain 2"/>
    <property type="match status" value="1"/>
</dbReference>
<dbReference type="Gene3D" id="3.40.50.720">
    <property type="entry name" value="NAD(P)-binding Rossmann-like Domain"/>
    <property type="match status" value="1"/>
</dbReference>
<dbReference type="HAMAP" id="MF_00966">
    <property type="entry name" value="G6PD"/>
    <property type="match status" value="1"/>
</dbReference>
<dbReference type="InterPro" id="IPR001282">
    <property type="entry name" value="G6P_DH"/>
</dbReference>
<dbReference type="InterPro" id="IPR019796">
    <property type="entry name" value="G6P_DH_AS"/>
</dbReference>
<dbReference type="InterPro" id="IPR022675">
    <property type="entry name" value="G6P_DH_C"/>
</dbReference>
<dbReference type="InterPro" id="IPR022674">
    <property type="entry name" value="G6P_DH_NAD-bd"/>
</dbReference>
<dbReference type="InterPro" id="IPR036291">
    <property type="entry name" value="NAD(P)-bd_dom_sf"/>
</dbReference>
<dbReference type="NCBIfam" id="TIGR00871">
    <property type="entry name" value="zwf"/>
    <property type="match status" value="1"/>
</dbReference>
<dbReference type="PANTHER" id="PTHR23429:SF0">
    <property type="entry name" value="GLUCOSE-6-PHOSPHATE 1-DEHYDROGENASE"/>
    <property type="match status" value="1"/>
</dbReference>
<dbReference type="PANTHER" id="PTHR23429">
    <property type="entry name" value="GLUCOSE-6-PHOSPHATE 1-DEHYDROGENASE G6PD"/>
    <property type="match status" value="1"/>
</dbReference>
<dbReference type="Pfam" id="PF02781">
    <property type="entry name" value="G6PD_C"/>
    <property type="match status" value="1"/>
</dbReference>
<dbReference type="Pfam" id="PF00479">
    <property type="entry name" value="G6PD_N"/>
    <property type="match status" value="1"/>
</dbReference>
<dbReference type="PIRSF" id="PIRSF000110">
    <property type="entry name" value="G6PD"/>
    <property type="match status" value="1"/>
</dbReference>
<dbReference type="PRINTS" id="PR00079">
    <property type="entry name" value="G6PDHDRGNASE"/>
</dbReference>
<dbReference type="SUPFAM" id="SSF55347">
    <property type="entry name" value="Glyceraldehyde-3-phosphate dehydrogenase-like, C-terminal domain"/>
    <property type="match status" value="1"/>
</dbReference>
<dbReference type="SUPFAM" id="SSF51735">
    <property type="entry name" value="NAD(P)-binding Rossmann-fold domains"/>
    <property type="match status" value="1"/>
</dbReference>
<dbReference type="PROSITE" id="PS00069">
    <property type="entry name" value="G6P_DEHYDROGENASE"/>
    <property type="match status" value="1"/>
</dbReference>
<organism>
    <name type="scientific">Mycolicibacterium smegmatis (strain ATCC 700084 / mc(2)155)</name>
    <name type="common">Mycobacterium smegmatis</name>
    <dbReference type="NCBI Taxonomy" id="246196"/>
    <lineage>
        <taxon>Bacteria</taxon>
        <taxon>Bacillati</taxon>
        <taxon>Actinomycetota</taxon>
        <taxon>Actinomycetes</taxon>
        <taxon>Mycobacteriales</taxon>
        <taxon>Mycobacteriaceae</taxon>
        <taxon>Mycolicibacterium</taxon>
    </lineage>
</organism>
<evidence type="ECO:0000255" key="1">
    <source>
        <dbReference type="HAMAP-Rule" id="MF_00966"/>
    </source>
</evidence>
<evidence type="ECO:0000269" key="2">
    <source>
    </source>
</evidence>
<name>G6PD_MYCS2</name>
<sequence>MNRTPSPVDPCDFVIFGGTGDLAARKLLPALYLRDRDGQLAGATRIIGVAKAGLDDAGYRNTVRAGLARHVEPDLLDSDVVDRFLSRLRFVSVDLTEPSDYAAVGDVLTSPDGGSGHDIRVFYLACAPALFGPICGALGAQGLVTESSRVVLEKPIGRDLASAQQINEAVGAVFAEHQIFRIDHYLGKESVQQLLVTRFGNTWLEPLWNSSRIDHVQITAAESLGVGARGDYYDQSGALRDMLQNHLLQVLCLVAMEPPTHVNRESVRDEKRKVLEALEPLTAEQTQRDTVTGQYGPGLVGDEVVGSYREEVADPHSRTETFVAVKAHIRNWRWAGVPFYLRTGKRMSQRFSEIVVQFKPVPLPMFPGIEGTSEPNRLIISLQPDEAIRLEMTAKEPGSGGRLRPVSLALNYTEAFPERSPDAYERLLMDVVRGDPTLFMRRDEVEAAWAWAEPILRHWQDADRVPRTYPAGTDGPVDAATLIERDGRRWHGGAA</sequence>
<keyword id="KW-0119">Carbohydrate metabolism</keyword>
<keyword id="KW-0313">Glucose metabolism</keyword>
<keyword id="KW-1017">Isopeptide bond</keyword>
<keyword id="KW-0521">NADP</keyword>
<keyword id="KW-0560">Oxidoreductase</keyword>
<keyword id="KW-1185">Reference proteome</keyword>
<keyword id="KW-0832">Ubl conjugation</keyword>
<comment type="function">
    <text evidence="1">Catalyzes the oxidation of glucose 6-phosphate to 6-phosphogluconolactone.</text>
</comment>
<comment type="catalytic activity">
    <reaction evidence="1">
        <text>D-glucose 6-phosphate + NADP(+) = 6-phospho-D-glucono-1,5-lactone + NADPH + H(+)</text>
        <dbReference type="Rhea" id="RHEA:15841"/>
        <dbReference type="ChEBI" id="CHEBI:15378"/>
        <dbReference type="ChEBI" id="CHEBI:57783"/>
        <dbReference type="ChEBI" id="CHEBI:57955"/>
        <dbReference type="ChEBI" id="CHEBI:58349"/>
        <dbReference type="ChEBI" id="CHEBI:61548"/>
        <dbReference type="EC" id="1.1.1.49"/>
    </reaction>
</comment>
<comment type="pathway">
    <text evidence="1">Carbohydrate degradation; pentose phosphate pathway; D-ribulose 5-phosphate from D-glucose 6-phosphate (oxidative stage): step 1/3.</text>
</comment>
<comment type="similarity">
    <text evidence="1">Belongs to the glucose-6-phosphate dehydrogenase family.</text>
</comment>
<protein>
    <recommendedName>
        <fullName evidence="1">Glucose-6-phosphate 1-dehydrogenase</fullName>
        <shortName evidence="1">G6PD</shortName>
        <ecNumber evidence="1">1.1.1.49</ecNumber>
    </recommendedName>
</protein>
<feature type="chain" id="PRO_0000396812" description="Glucose-6-phosphate 1-dehydrogenase">
    <location>
        <begin position="1"/>
        <end position="495"/>
    </location>
</feature>
<feature type="active site" description="Proton acceptor" evidence="1">
    <location>
        <position position="246"/>
    </location>
</feature>
<feature type="binding site" evidence="1">
    <location>
        <begin position="94"/>
        <end position="95"/>
    </location>
    <ligand>
        <name>NADP(+)</name>
        <dbReference type="ChEBI" id="CHEBI:58349"/>
    </ligand>
</feature>
<feature type="binding site" evidence="1">
    <location>
        <position position="154"/>
    </location>
    <ligand>
        <name>NADP(+)</name>
        <dbReference type="ChEBI" id="CHEBI:58349"/>
    </ligand>
</feature>
<feature type="binding site" evidence="1">
    <location>
        <position position="184"/>
    </location>
    <ligand>
        <name>substrate</name>
    </ligand>
</feature>
<feature type="binding site" evidence="1">
    <location>
        <position position="188"/>
    </location>
    <ligand>
        <name>substrate</name>
    </ligand>
</feature>
<feature type="binding site" evidence="1">
    <location>
        <position position="222"/>
    </location>
    <ligand>
        <name>substrate</name>
    </ligand>
</feature>
<feature type="binding site" evidence="1">
    <location>
        <position position="241"/>
    </location>
    <ligand>
        <name>substrate</name>
    </ligand>
</feature>
<feature type="binding site" evidence="1">
    <location>
        <position position="345"/>
    </location>
    <ligand>
        <name>substrate</name>
    </ligand>
</feature>
<feature type="cross-link" description="Isoglutamyl lysine isopeptide (Lys-Gln) (interchain with Q-Cter in protein Pup)" evidence="2">
    <location>
        <position position="51"/>
    </location>
</feature>
<reference key="1">
    <citation type="submission" date="2006-10" db="EMBL/GenBank/DDBJ databases">
        <authorList>
            <person name="Fleischmann R.D."/>
            <person name="Dodson R.J."/>
            <person name="Haft D.H."/>
            <person name="Merkel J.S."/>
            <person name="Nelson W.C."/>
            <person name="Fraser C.M."/>
        </authorList>
    </citation>
    <scope>NUCLEOTIDE SEQUENCE [LARGE SCALE GENOMIC DNA]</scope>
    <source>
        <strain>ATCC 700084 / mc(2)155</strain>
    </source>
</reference>
<reference key="2">
    <citation type="journal article" date="2007" name="Genome Biol.">
        <title>Interrupted coding sequences in Mycobacterium smegmatis: authentic mutations or sequencing errors?</title>
        <authorList>
            <person name="Deshayes C."/>
            <person name="Perrodou E."/>
            <person name="Gallien S."/>
            <person name="Euphrasie D."/>
            <person name="Schaeffer C."/>
            <person name="Van-Dorsselaer A."/>
            <person name="Poch O."/>
            <person name="Lecompte O."/>
            <person name="Reyrat J.-M."/>
        </authorList>
    </citation>
    <scope>NUCLEOTIDE SEQUENCE [LARGE SCALE GENOMIC DNA]</scope>
    <source>
        <strain>ATCC 700084 / mc(2)155</strain>
    </source>
</reference>
<reference key="3">
    <citation type="journal article" date="2009" name="Genome Res.">
        <title>Ortho-proteogenomics: multiple proteomes investigation through orthology and a new MS-based protocol.</title>
        <authorList>
            <person name="Gallien S."/>
            <person name="Perrodou E."/>
            <person name="Carapito C."/>
            <person name="Deshayes C."/>
            <person name="Reyrat J.-M."/>
            <person name="Van Dorsselaer A."/>
            <person name="Poch O."/>
            <person name="Schaeffer C."/>
            <person name="Lecompte O."/>
        </authorList>
    </citation>
    <scope>NUCLEOTIDE SEQUENCE [LARGE SCALE GENOMIC DNA]</scope>
    <source>
        <strain>ATCC 700084 / mc(2)155</strain>
    </source>
</reference>
<reference key="4">
    <citation type="journal article" date="2010" name="Mol. Biosyst.">
        <title>Expansion of the mycobacterial 'PUPylome'.</title>
        <authorList>
            <person name="Watrous J."/>
            <person name="Burns K."/>
            <person name="Liu W.T."/>
            <person name="Patel A."/>
            <person name="Hook V."/>
            <person name="Bafna V."/>
            <person name="Barry C.E. III"/>
            <person name="Bark S."/>
            <person name="Dorrestein P.C."/>
        </authorList>
    </citation>
    <scope>PUPYLATION AT LYS-51</scope>
    <scope>IDENTIFICATION BY MASS SPECTROMETRY</scope>
</reference>
<proteinExistence type="evidence at protein level"/>
<accession>A0QP90</accession>
<accession>I7FCZ8</accession>
<gene>
    <name evidence="1" type="primary">zwf</name>
    <name type="ordered locus">MSMEG_0314</name>
    <name type="ordered locus">MSMEI_0307</name>
</gene>